<comment type="function">
    <text evidence="2">Involved in mRNA degradation. Hydrolyzes single-stranded polyribonucleotides processively in the 3' to 5' direction.</text>
</comment>
<comment type="catalytic activity">
    <reaction evidence="2">
        <text>Exonucleolytic cleavage in the 3'- to 5'-direction to yield nucleoside 5'-phosphates.</text>
        <dbReference type="EC" id="3.1.13.1"/>
    </reaction>
</comment>
<comment type="subcellular location">
    <subcellularLocation>
        <location evidence="2">Cytoplasm</location>
    </subcellularLocation>
</comment>
<comment type="similarity">
    <text evidence="2">Belongs to the RNR ribonuclease family. RNase II subfamily.</text>
</comment>
<organism>
    <name type="scientific">Escherichia coli (strain 55989 / EAEC)</name>
    <dbReference type="NCBI Taxonomy" id="585055"/>
    <lineage>
        <taxon>Bacteria</taxon>
        <taxon>Pseudomonadati</taxon>
        <taxon>Pseudomonadota</taxon>
        <taxon>Gammaproteobacteria</taxon>
        <taxon>Enterobacterales</taxon>
        <taxon>Enterobacteriaceae</taxon>
        <taxon>Escherichia</taxon>
    </lineage>
</organism>
<keyword id="KW-0963">Cytoplasm</keyword>
<keyword id="KW-0269">Exonuclease</keyword>
<keyword id="KW-0378">Hydrolase</keyword>
<keyword id="KW-0540">Nuclease</keyword>
<keyword id="KW-1185">Reference proteome</keyword>
<keyword id="KW-0694">RNA-binding</keyword>
<proteinExistence type="inferred from homology"/>
<accession>B7L4C3</accession>
<reference key="1">
    <citation type="journal article" date="2009" name="PLoS Genet.">
        <title>Organised genome dynamics in the Escherichia coli species results in highly diverse adaptive paths.</title>
        <authorList>
            <person name="Touchon M."/>
            <person name="Hoede C."/>
            <person name="Tenaillon O."/>
            <person name="Barbe V."/>
            <person name="Baeriswyl S."/>
            <person name="Bidet P."/>
            <person name="Bingen E."/>
            <person name="Bonacorsi S."/>
            <person name="Bouchier C."/>
            <person name="Bouvet O."/>
            <person name="Calteau A."/>
            <person name="Chiapello H."/>
            <person name="Clermont O."/>
            <person name="Cruveiller S."/>
            <person name="Danchin A."/>
            <person name="Diard M."/>
            <person name="Dossat C."/>
            <person name="Karoui M.E."/>
            <person name="Frapy E."/>
            <person name="Garry L."/>
            <person name="Ghigo J.M."/>
            <person name="Gilles A.M."/>
            <person name="Johnson J."/>
            <person name="Le Bouguenec C."/>
            <person name="Lescat M."/>
            <person name="Mangenot S."/>
            <person name="Martinez-Jehanne V."/>
            <person name="Matic I."/>
            <person name="Nassif X."/>
            <person name="Oztas S."/>
            <person name="Petit M.A."/>
            <person name="Pichon C."/>
            <person name="Rouy Z."/>
            <person name="Ruf C.S."/>
            <person name="Schneider D."/>
            <person name="Tourret J."/>
            <person name="Vacherie B."/>
            <person name="Vallenet D."/>
            <person name="Medigue C."/>
            <person name="Rocha E.P.C."/>
            <person name="Denamur E."/>
        </authorList>
    </citation>
    <scope>NUCLEOTIDE SEQUENCE [LARGE SCALE GENOMIC DNA]</scope>
    <source>
        <strain>55989 / EAEC</strain>
    </source>
</reference>
<protein>
    <recommendedName>
        <fullName evidence="2">Exoribonuclease 2</fullName>
        <ecNumber evidence="2">3.1.13.1</ecNumber>
    </recommendedName>
    <alternativeName>
        <fullName evidence="2">Exoribonuclease II</fullName>
        <shortName evidence="2">RNase II</shortName>
        <shortName evidence="2">Ribonuclease II</shortName>
    </alternativeName>
</protein>
<evidence type="ECO:0000255" key="1"/>
<evidence type="ECO:0000255" key="2">
    <source>
        <dbReference type="HAMAP-Rule" id="MF_01036"/>
    </source>
</evidence>
<gene>
    <name evidence="2" type="primary">rnb</name>
    <name type="ordered locus">EC55989_1448</name>
</gene>
<name>RNB_ECO55</name>
<feature type="chain" id="PRO_1000149457" description="Exoribonuclease 2">
    <location>
        <begin position="1"/>
        <end position="644"/>
    </location>
</feature>
<feature type="domain" description="RNB" evidence="1">
    <location>
        <begin position="189"/>
        <end position="516"/>
    </location>
</feature>
<feature type="domain" description="S1 motif" evidence="2">
    <location>
        <begin position="561"/>
        <end position="643"/>
    </location>
</feature>
<dbReference type="EC" id="3.1.13.1" evidence="2"/>
<dbReference type="EMBL" id="CU928145">
    <property type="protein sequence ID" value="CAU97306.1"/>
    <property type="molecule type" value="Genomic_DNA"/>
</dbReference>
<dbReference type="RefSeq" id="WP_000484984.1">
    <property type="nucleotide sequence ID" value="NC_011748.1"/>
</dbReference>
<dbReference type="SMR" id="B7L4C3"/>
<dbReference type="KEGG" id="eck:EC55989_1448"/>
<dbReference type="HOGENOM" id="CLU_002333_7_3_6"/>
<dbReference type="Proteomes" id="UP000000746">
    <property type="component" value="Chromosome"/>
</dbReference>
<dbReference type="GO" id="GO:0005829">
    <property type="term" value="C:cytosol"/>
    <property type="evidence" value="ECO:0007669"/>
    <property type="project" value="TreeGrafter"/>
</dbReference>
<dbReference type="GO" id="GO:0008859">
    <property type="term" value="F:exoribonuclease II activity"/>
    <property type="evidence" value="ECO:0007669"/>
    <property type="project" value="UniProtKB-UniRule"/>
</dbReference>
<dbReference type="GO" id="GO:0003723">
    <property type="term" value="F:RNA binding"/>
    <property type="evidence" value="ECO:0007669"/>
    <property type="project" value="UniProtKB-KW"/>
</dbReference>
<dbReference type="GO" id="GO:0006402">
    <property type="term" value="P:mRNA catabolic process"/>
    <property type="evidence" value="ECO:0007669"/>
    <property type="project" value="UniProtKB-UniRule"/>
</dbReference>
<dbReference type="FunFam" id="2.40.50.140:FF:000079">
    <property type="entry name" value="Exoribonuclease 2"/>
    <property type="match status" value="1"/>
</dbReference>
<dbReference type="FunFam" id="2.40.50.140:FF:000081">
    <property type="entry name" value="Exoribonuclease 2"/>
    <property type="match status" value="1"/>
</dbReference>
<dbReference type="FunFam" id="2.40.50.640:FF:000001">
    <property type="entry name" value="Exoribonuclease 2"/>
    <property type="match status" value="1"/>
</dbReference>
<dbReference type="Gene3D" id="2.40.50.640">
    <property type="match status" value="1"/>
</dbReference>
<dbReference type="Gene3D" id="2.40.50.140">
    <property type="entry name" value="Nucleic acid-binding proteins"/>
    <property type="match status" value="2"/>
</dbReference>
<dbReference type="HAMAP" id="MF_01036">
    <property type="entry name" value="RNase_II"/>
    <property type="match status" value="1"/>
</dbReference>
<dbReference type="InterPro" id="IPR011129">
    <property type="entry name" value="CSD"/>
</dbReference>
<dbReference type="InterPro" id="IPR012340">
    <property type="entry name" value="NA-bd_OB-fold"/>
</dbReference>
<dbReference type="InterPro" id="IPR013223">
    <property type="entry name" value="RNase_B_OB_dom"/>
</dbReference>
<dbReference type="InterPro" id="IPR011804">
    <property type="entry name" value="RNase_II"/>
</dbReference>
<dbReference type="InterPro" id="IPR001900">
    <property type="entry name" value="RNase_II/R"/>
</dbReference>
<dbReference type="InterPro" id="IPR022966">
    <property type="entry name" value="RNase_II/R_CS"/>
</dbReference>
<dbReference type="InterPro" id="IPR004476">
    <property type="entry name" value="RNase_II/RNase_R"/>
</dbReference>
<dbReference type="InterPro" id="IPR050180">
    <property type="entry name" value="RNR_Ribonuclease"/>
</dbReference>
<dbReference type="InterPro" id="IPR003029">
    <property type="entry name" value="S1_domain"/>
</dbReference>
<dbReference type="NCBIfam" id="TIGR00358">
    <property type="entry name" value="3_prime_RNase"/>
    <property type="match status" value="1"/>
</dbReference>
<dbReference type="NCBIfam" id="NF003455">
    <property type="entry name" value="PRK05054.1"/>
    <property type="match status" value="1"/>
</dbReference>
<dbReference type="NCBIfam" id="TIGR02062">
    <property type="entry name" value="RNase_B"/>
    <property type="match status" value="1"/>
</dbReference>
<dbReference type="PANTHER" id="PTHR23355:SF37">
    <property type="entry name" value="EXORIBONUCLEASE 2"/>
    <property type="match status" value="1"/>
</dbReference>
<dbReference type="PANTHER" id="PTHR23355">
    <property type="entry name" value="RIBONUCLEASE"/>
    <property type="match status" value="1"/>
</dbReference>
<dbReference type="Pfam" id="PF08206">
    <property type="entry name" value="OB_RNB"/>
    <property type="match status" value="1"/>
</dbReference>
<dbReference type="Pfam" id="PF00773">
    <property type="entry name" value="RNB"/>
    <property type="match status" value="1"/>
</dbReference>
<dbReference type="Pfam" id="PF00575">
    <property type="entry name" value="S1"/>
    <property type="match status" value="1"/>
</dbReference>
<dbReference type="SMART" id="SM00357">
    <property type="entry name" value="CSP"/>
    <property type="match status" value="1"/>
</dbReference>
<dbReference type="SMART" id="SM00955">
    <property type="entry name" value="RNB"/>
    <property type="match status" value="1"/>
</dbReference>
<dbReference type="SUPFAM" id="SSF50249">
    <property type="entry name" value="Nucleic acid-binding proteins"/>
    <property type="match status" value="4"/>
</dbReference>
<dbReference type="PROSITE" id="PS01175">
    <property type="entry name" value="RIBONUCLEASE_II"/>
    <property type="match status" value="1"/>
</dbReference>
<sequence>MFQDNPLLAQLKQQLHSQTPRAEGVVKATEKGFGFLEVDAQKSYFIPPPQMKKVMHGDRIIAVIHSEKERESAEPEELVEPFLTRFVGKVQGKNDRLAIVPDHPLLKDAIPCRAARGLNHEFKEGDWAVAEMRRHPLKGDRSFYAELTQYITFGDDHFVPWWVTLARHNLEKEAPDGVATEMLDEGLVREDLTALDFVTIDSASTEDMDDALFAKALPDDKLQLIVAIADPTAWIAEGSKLDKAAKIRAFTNYLPGFNIPMLPRELSDDLCSLRANEVRPVLACRMTLSADGTIEDNIEFFAATIESKAKLVYDQVSDWLENTGDWQPESEAIAEQVRLLAQICQRRGEWRHNHALVFKDRPDYRFILGEKGEVLDIVAEPRRIANRIVEEAMIAANICAARVLRDKLGFGIYNVHMGFDPANADALAALLKTHGLHVDAEEVLTLDGFCKLRRELDAQPTGFLDSRIRRFQSFAEISTEPGPHFGLGLEAYATWTSPIRKYGDMINHRLLKAVIKGETATRPQDEITVQMAERRRLNRMAERDVGDWLYARFLKDKAGTDTRFAAEIVDISRGGMRVRLVDNGAIAFIPAPFLHAVRDELVCSQENGTVQIKGETVYKVTDVIDVTIAEVRMETRSIIARPVA</sequence>